<proteinExistence type="evidence at protein level"/>
<reference evidence="7" key="1">
    <citation type="journal article" date="1997" name="Exp. Parasitol.">
        <title>Cloning of genes, expression and antigenicity analysis of the Leishmania infantum KMP-11 protein.</title>
        <authorList>
            <person name="Berberich C."/>
            <person name="Requena J.M."/>
            <person name="Alonso C."/>
        </authorList>
    </citation>
    <scope>NUCLEOTIDE SEQUENCE [GENOMIC DNA]</scope>
    <source>
        <strain>LEM 78 / MON-1</strain>
    </source>
</reference>
<reference evidence="6" key="2">
    <citation type="journal article" date="1998" name="Biochim. Biophys. Acta">
        <title>The expression of the Leishmania infantum KMP-11 protein is developmentally regulated and stage specific.</title>
        <authorList>
            <person name="Berberich C."/>
            <person name="Machado G."/>
            <person name="Morales G."/>
            <person name="Carrillo G."/>
            <person name="Jimenez-Ruiz A."/>
            <person name="Alonso C."/>
        </authorList>
    </citation>
    <scope>SUBCELLULAR LOCATION</scope>
    <scope>TISSUE SPECIFICITY</scope>
    <scope>DEVELOPMENTAL STAGE</scope>
</reference>
<reference evidence="6" key="3">
    <citation type="journal article" date="1999" name="Eur. J. Biochem.">
        <title>Folding stability of the kinetoplastid membrane protein-11 (KMP-11) from Leishmania infantum.</title>
        <authorList>
            <person name="Fuertes M.A."/>
            <person name="Berberich C."/>
            <person name="Lozano R.M."/>
            <person name="Gimenez-Gallego G."/>
            <person name="Alonso C."/>
        </authorList>
    </citation>
    <scope>SUBUNIT</scope>
    <scope>SECONDARY STRUCTURE PREDICTION</scope>
</reference>
<reference evidence="6" key="4">
    <citation type="journal article" date="2001" name="J. Biol. Inorg. Chem.">
        <title>Calcium-induced conformational changes in Leishmania infantum kinetoplastid membrane protein-11.</title>
        <authorList>
            <person name="Fuertes M.A."/>
            <person name="Perez J.M."/>
            <person name="Soto M."/>
            <person name="Lopez M.C."/>
            <person name="Alonso C."/>
        </authorList>
    </citation>
    <scope>CALCIUM-BINDING DATA</scope>
</reference>
<protein>
    <recommendedName>
        <fullName>Kinetoplastid membrane protein 11B</fullName>
    </recommendedName>
</protein>
<comment type="function">
    <text evidence="1 4">May be involved in the regulation of the cytoskeleton through interaction with the subpellicular microtubules. May be involved in parasite mobility and attachment to the surface of the host cell. Behaves as a strong immunogen during infection.</text>
</comment>
<comment type="subunit">
    <text evidence="2">Monomer.</text>
</comment>
<comment type="subcellular location">
    <subcellularLocation>
        <location evidence="5">Cytoplasm</location>
        <location evidence="5">Cytoskeleton</location>
    </subcellularLocation>
    <subcellularLocation>
        <location evidence="5">Cell projection</location>
        <location evidence="5">Cilium</location>
        <location evidence="5">Flagellum</location>
    </subcellularLocation>
    <text>Associated with microtubules. Associated with the flagellum and flagellar pocket.</text>
</comment>
<comment type="developmental stage">
    <text evidence="5">Expressed abundantly in logarithmic phase promastigotes, and to a lesser extent in stationary phase promastigotes and amastigotes.</text>
</comment>
<comment type="miscellaneous">
    <text evidence="3">Binds calcium.</text>
</comment>
<comment type="similarity">
    <text evidence="6">Belongs to the KMP-11 family.</text>
</comment>
<feature type="chain" id="PRO_0000205712" description="Kinetoplastid membrane protein 11B">
    <location>
        <begin position="1"/>
        <end position="92"/>
    </location>
</feature>
<name>KM11B_LEIIN</name>
<gene>
    <name type="primary">KMP-11B</name>
</gene>
<keyword id="KW-0106">Calcium</keyword>
<keyword id="KW-0966">Cell projection</keyword>
<keyword id="KW-0969">Cilium</keyword>
<keyword id="KW-0963">Cytoplasm</keyword>
<keyword id="KW-0206">Cytoskeleton</keyword>
<keyword id="KW-0282">Flagellum</keyword>
<keyword id="KW-0493">Microtubule</keyword>
<evidence type="ECO:0000250" key="1">
    <source>
        <dbReference type="UniProtKB" id="Q9U6Z1"/>
    </source>
</evidence>
<evidence type="ECO:0000269" key="2">
    <source>
    </source>
</evidence>
<evidence type="ECO:0000269" key="3">
    <source>
    </source>
</evidence>
<evidence type="ECO:0000269" key="4">
    <source>
    </source>
</evidence>
<evidence type="ECO:0000269" key="5">
    <source>
    </source>
</evidence>
<evidence type="ECO:0000305" key="6"/>
<evidence type="ECO:0000312" key="7">
    <source>
        <dbReference type="EMBL" id="CAA64882.1"/>
    </source>
</evidence>
<organism evidence="7">
    <name type="scientific">Leishmania infantum</name>
    <dbReference type="NCBI Taxonomy" id="5671"/>
    <lineage>
        <taxon>Eukaryota</taxon>
        <taxon>Discoba</taxon>
        <taxon>Euglenozoa</taxon>
        <taxon>Kinetoplastea</taxon>
        <taxon>Metakinetoplastina</taxon>
        <taxon>Trypanosomatida</taxon>
        <taxon>Trypanosomatidae</taxon>
        <taxon>Leishmaniinae</taxon>
        <taxon>Leishmania</taxon>
    </lineage>
</organism>
<dbReference type="EMBL" id="X95626">
    <property type="protein sequence ID" value="CAA64882.1"/>
    <property type="molecule type" value="Genomic_DNA"/>
</dbReference>
<dbReference type="SMR" id="Q25297"/>
<dbReference type="VEuPathDB" id="TriTrypDB:LINF_350027500"/>
<dbReference type="GO" id="GO:0005737">
    <property type="term" value="C:cytoplasm"/>
    <property type="evidence" value="ECO:0007669"/>
    <property type="project" value="UniProtKB-KW"/>
</dbReference>
<dbReference type="GO" id="GO:0005874">
    <property type="term" value="C:microtubule"/>
    <property type="evidence" value="ECO:0007669"/>
    <property type="project" value="UniProtKB-KW"/>
</dbReference>
<dbReference type="GO" id="GO:0015630">
    <property type="term" value="C:microtubule cytoskeleton"/>
    <property type="evidence" value="ECO:0000250"/>
    <property type="project" value="UniProtKB"/>
</dbReference>
<dbReference type="GO" id="GO:0031514">
    <property type="term" value="C:motile cilium"/>
    <property type="evidence" value="ECO:0007669"/>
    <property type="project" value="UniProtKB-SubCell"/>
</dbReference>
<dbReference type="GO" id="GO:0007010">
    <property type="term" value="P:cytoskeleton organization"/>
    <property type="evidence" value="ECO:0000250"/>
    <property type="project" value="UniProtKB"/>
</dbReference>
<dbReference type="GO" id="GO:0006952">
    <property type="term" value="P:defense response"/>
    <property type="evidence" value="ECO:0007669"/>
    <property type="project" value="InterPro"/>
</dbReference>
<dbReference type="GO" id="GO:0008284">
    <property type="term" value="P:positive regulation of cell population proliferation"/>
    <property type="evidence" value="ECO:0007669"/>
    <property type="project" value="InterPro"/>
</dbReference>
<dbReference type="Gene3D" id="1.20.120.20">
    <property type="entry name" value="Apolipoprotein"/>
    <property type="match status" value="1"/>
</dbReference>
<dbReference type="InterPro" id="IPR004132">
    <property type="entry name" value="KMP11"/>
</dbReference>
<dbReference type="Pfam" id="PF03037">
    <property type="entry name" value="KMP11"/>
    <property type="match status" value="1"/>
</dbReference>
<accession>Q25297</accession>
<sequence>MATTYEEFSAKLDRLGEEFNRKMQEQNAKFFADKPDESTLSPEMKEHYEKFERMIKEHTEKFNKKMHEHSEHFKQKFAELLEQQKAAQYPSK</sequence>